<organismHost>
    <name type="scientific">Connochaetes taurinus</name>
    <name type="common">Blue wildebeest</name>
    <dbReference type="NCBI Taxonomy" id="9927"/>
</organismHost>
<keyword id="KW-1185">Reference proteome</keyword>
<proteinExistence type="predicted"/>
<name>VG41_ALHV1</name>
<protein>
    <recommendedName>
        <fullName>Uncharacterized gene 41 protein</fullName>
    </recommendedName>
</protein>
<organism>
    <name type="scientific">Alcelaphine herpesvirus 1 (strain C500)</name>
    <name type="common">AlHV-1</name>
    <name type="synonym">Malignant catarrhal fever virus</name>
    <dbReference type="NCBI Taxonomy" id="654901"/>
    <lineage>
        <taxon>Viruses</taxon>
        <taxon>Duplodnaviria</taxon>
        <taxon>Heunggongvirae</taxon>
        <taxon>Peploviricota</taxon>
        <taxon>Herviviricetes</taxon>
        <taxon>Herpesvirales</taxon>
        <taxon>Orthoherpesviridae</taxon>
        <taxon>Gammaherpesvirinae</taxon>
        <taxon>Macavirus</taxon>
        <taxon>Macavirus alcelaphinegamma1</taxon>
    </lineage>
</organism>
<feature type="chain" id="PRO_0000405733" description="Uncharacterized gene 41 protein">
    <location>
        <begin position="1"/>
        <end position="175"/>
    </location>
</feature>
<accession>O36390</accession>
<sequence>MLFNFLQKNLCKAFTFNMTSGHCQQTLATLFRSTLLLSGDNTKLFTPIRPQSWTCVLNYFIYLLCSQVTPETMFKDIVSFLQANGASSACWVLPLNFTETRAPKQQVSRLPSKWKILTADGSPQPWQVYWGIPSCLAYASYVGHLAEIATDWGKVTETNTQELLNHIFDLLRIFF</sequence>
<dbReference type="EMBL" id="AF005370">
    <property type="protein sequence ID" value="AAC58087.1"/>
    <property type="molecule type" value="Genomic_DNA"/>
</dbReference>
<dbReference type="PIR" id="T03135">
    <property type="entry name" value="T03135"/>
</dbReference>
<dbReference type="RefSeq" id="NP_065539.1">
    <property type="nucleotide sequence ID" value="NC_002531.1"/>
</dbReference>
<dbReference type="KEGG" id="vg:911760"/>
<dbReference type="Proteomes" id="UP000000941">
    <property type="component" value="Segment"/>
</dbReference>
<dbReference type="InterPro" id="IPR008650">
    <property type="entry name" value="Helicase-primas_cplx_Herpesvir"/>
</dbReference>
<dbReference type="Pfam" id="PF05774">
    <property type="entry name" value="Herpes_heli_pri"/>
    <property type="match status" value="1"/>
</dbReference>
<reference key="1">
    <citation type="journal article" date="1997" name="J. Virol.">
        <title>Primary structure of the alcelaphine herpesvirus 1 genome.</title>
        <authorList>
            <person name="Ensser A."/>
            <person name="Pflanz R."/>
            <person name="Fleckenstein B."/>
        </authorList>
    </citation>
    <scope>NUCLEOTIDE SEQUENCE [LARGE SCALE GENOMIC DNA]</scope>
</reference>
<gene>
    <name type="primary">41</name>
</gene>